<comment type="function">
    <text evidence="1">Thiol-specific peroxidase that catalyzes the reduction of hydrogen peroxide and organic hydroperoxides to water and alcohols, respectively. Plays a role in cell protection against oxidative stress by detoxifying peroxides and as sensor of hydrogen peroxide-mediated signaling events.</text>
</comment>
<comment type="catalytic activity">
    <reaction evidence="1">
        <text>a hydroperoxide + [thioredoxin]-dithiol = an alcohol + [thioredoxin]-disulfide + H2O</text>
        <dbReference type="Rhea" id="RHEA:62620"/>
        <dbReference type="Rhea" id="RHEA-COMP:10698"/>
        <dbReference type="Rhea" id="RHEA-COMP:10700"/>
        <dbReference type="ChEBI" id="CHEBI:15377"/>
        <dbReference type="ChEBI" id="CHEBI:29950"/>
        <dbReference type="ChEBI" id="CHEBI:30879"/>
        <dbReference type="ChEBI" id="CHEBI:35924"/>
        <dbReference type="ChEBI" id="CHEBI:50058"/>
        <dbReference type="EC" id="1.11.1.24"/>
    </reaction>
</comment>
<comment type="subunit">
    <text evidence="1">Monomer.</text>
</comment>
<comment type="miscellaneous">
    <text evidence="1">The active site is a conserved redox-active cysteine residue, the peroxidatic cysteine (C(P)), which makes the nucleophilic attack on the peroxide substrate. The peroxide oxidizes the C(P)-SH to cysteine sulfenic acid (C(P)-SOH), which then reacts with another cysteine residue, the resolving cysteine (C(R)), to form a disulfide bridge. The disulfide is subsequently reduced by an appropriate electron donor to complete the catalytic cycle. In this atypical 2-Cys peroxiredoxin, C(R) is present in the same subunit to form an intramolecular disulfide. The disulfide is subsequently reduced by thioredoxin.</text>
</comment>
<comment type="similarity">
    <text evidence="3">Belongs to the peroxiredoxin family. BCP/PrxQ subfamily.</text>
</comment>
<proteinExistence type="inferred from homology"/>
<sequence length="156" mass="17634">MNPLKAGDIAPKFSLPDQDGEQVNLTDFQGQRVLVYFYPKAMTPGCTVQACGLRDNMDELKKAGVDVLGISTDKPEKLSRFAEKELLNFTLLSDEDHQVCEQFGVWGEKSFMGKTYDGIHRISFLIDADGKIEHVFDDFKTSNHHDVVLNWLKEHA</sequence>
<accession>P0AE55</accession>
<accession>P23480</accession>
<protein>
    <recommendedName>
        <fullName>Putative peroxiredoxin bcp</fullName>
        <ecNumber evidence="1">1.11.1.24</ecNumber>
    </recommendedName>
    <alternativeName>
        <fullName>Bacterioferritin comigratory protein</fullName>
    </alternativeName>
    <alternativeName>
        <fullName>Thioredoxin peroxidase</fullName>
    </alternativeName>
    <alternativeName>
        <fullName evidence="3">Thioredoxin-dependent peroxiredoxin bcp</fullName>
    </alternativeName>
</protein>
<feature type="chain" id="PRO_0000135140" description="Putative peroxiredoxin bcp">
    <location>
        <begin position="1"/>
        <end position="156"/>
    </location>
</feature>
<feature type="domain" description="Thioredoxin" evidence="2">
    <location>
        <begin position="4"/>
        <end position="156"/>
    </location>
</feature>
<feature type="active site" description="Cysteine sulfenic acid (-SOH) intermediate" evidence="1">
    <location>
        <position position="46"/>
    </location>
</feature>
<feature type="disulfide bond" description="Redox-active" evidence="1">
    <location>
        <begin position="46"/>
        <end position="51"/>
    </location>
</feature>
<keyword id="KW-0049">Antioxidant</keyword>
<keyword id="KW-1015">Disulfide bond</keyword>
<keyword id="KW-0560">Oxidoreductase</keyword>
<keyword id="KW-0575">Peroxidase</keyword>
<keyword id="KW-0676">Redox-active center</keyword>
<keyword id="KW-1185">Reference proteome</keyword>
<organism>
    <name type="scientific">Shigella flexneri</name>
    <dbReference type="NCBI Taxonomy" id="623"/>
    <lineage>
        <taxon>Bacteria</taxon>
        <taxon>Pseudomonadati</taxon>
        <taxon>Pseudomonadota</taxon>
        <taxon>Gammaproteobacteria</taxon>
        <taxon>Enterobacterales</taxon>
        <taxon>Enterobacteriaceae</taxon>
        <taxon>Shigella</taxon>
    </lineage>
</organism>
<name>BCP_SHIFL</name>
<dbReference type="EC" id="1.11.1.24" evidence="1"/>
<dbReference type="EMBL" id="AE005674">
    <property type="protein sequence ID" value="AAN44026.1"/>
    <property type="molecule type" value="Genomic_DNA"/>
</dbReference>
<dbReference type="EMBL" id="AE014073">
    <property type="protein sequence ID" value="AAP17839.1"/>
    <property type="molecule type" value="Genomic_DNA"/>
</dbReference>
<dbReference type="RefSeq" id="NP_708319.1">
    <property type="nucleotide sequence ID" value="NC_004337.2"/>
</dbReference>
<dbReference type="RefSeq" id="WP_001068682.1">
    <property type="nucleotide sequence ID" value="NZ_WPGW01000011.1"/>
</dbReference>
<dbReference type="SMR" id="P0AE55"/>
<dbReference type="STRING" id="198214.SF2523"/>
<dbReference type="PaxDb" id="198214-SF2523"/>
<dbReference type="GeneID" id="1024383"/>
<dbReference type="GeneID" id="93774658"/>
<dbReference type="KEGG" id="sfl:SF2523"/>
<dbReference type="KEGG" id="sfx:S2673"/>
<dbReference type="PATRIC" id="fig|198214.7.peg.3016"/>
<dbReference type="HOGENOM" id="CLU_042529_14_1_6"/>
<dbReference type="BRENDA" id="1.11.1.24">
    <property type="organism ID" value="5712"/>
</dbReference>
<dbReference type="Proteomes" id="UP000001006">
    <property type="component" value="Chromosome"/>
</dbReference>
<dbReference type="Proteomes" id="UP000002673">
    <property type="component" value="Chromosome"/>
</dbReference>
<dbReference type="GO" id="GO:0005737">
    <property type="term" value="C:cytoplasm"/>
    <property type="evidence" value="ECO:0007669"/>
    <property type="project" value="TreeGrafter"/>
</dbReference>
<dbReference type="GO" id="GO:0008379">
    <property type="term" value="F:thioredoxin peroxidase activity"/>
    <property type="evidence" value="ECO:0007669"/>
    <property type="project" value="TreeGrafter"/>
</dbReference>
<dbReference type="GO" id="GO:0045454">
    <property type="term" value="P:cell redox homeostasis"/>
    <property type="evidence" value="ECO:0007669"/>
    <property type="project" value="TreeGrafter"/>
</dbReference>
<dbReference type="GO" id="GO:0034599">
    <property type="term" value="P:cellular response to oxidative stress"/>
    <property type="evidence" value="ECO:0007669"/>
    <property type="project" value="TreeGrafter"/>
</dbReference>
<dbReference type="CDD" id="cd03017">
    <property type="entry name" value="PRX_BCP"/>
    <property type="match status" value="1"/>
</dbReference>
<dbReference type="FunFam" id="3.40.30.10:FF:000007">
    <property type="entry name" value="Thioredoxin-dependent thiol peroxidase"/>
    <property type="match status" value="1"/>
</dbReference>
<dbReference type="Gene3D" id="3.40.30.10">
    <property type="entry name" value="Glutaredoxin"/>
    <property type="match status" value="1"/>
</dbReference>
<dbReference type="InterPro" id="IPR000866">
    <property type="entry name" value="AhpC/TSA"/>
</dbReference>
<dbReference type="InterPro" id="IPR024706">
    <property type="entry name" value="Peroxiredoxin_AhpC-typ"/>
</dbReference>
<dbReference type="InterPro" id="IPR050924">
    <property type="entry name" value="Peroxiredoxin_BCP/PrxQ"/>
</dbReference>
<dbReference type="InterPro" id="IPR036249">
    <property type="entry name" value="Thioredoxin-like_sf"/>
</dbReference>
<dbReference type="InterPro" id="IPR013766">
    <property type="entry name" value="Thioredoxin_domain"/>
</dbReference>
<dbReference type="NCBIfam" id="NF006960">
    <property type="entry name" value="PRK09437.1"/>
    <property type="match status" value="1"/>
</dbReference>
<dbReference type="PANTHER" id="PTHR42801:SF4">
    <property type="entry name" value="AHPC_TSA FAMILY PROTEIN"/>
    <property type="match status" value="1"/>
</dbReference>
<dbReference type="PANTHER" id="PTHR42801">
    <property type="entry name" value="THIOREDOXIN-DEPENDENT PEROXIDE REDUCTASE"/>
    <property type="match status" value="1"/>
</dbReference>
<dbReference type="Pfam" id="PF00578">
    <property type="entry name" value="AhpC-TSA"/>
    <property type="match status" value="1"/>
</dbReference>
<dbReference type="PIRSF" id="PIRSF000239">
    <property type="entry name" value="AHPC"/>
    <property type="match status" value="1"/>
</dbReference>
<dbReference type="SUPFAM" id="SSF52833">
    <property type="entry name" value="Thioredoxin-like"/>
    <property type="match status" value="1"/>
</dbReference>
<dbReference type="PROSITE" id="PS51352">
    <property type="entry name" value="THIOREDOXIN_2"/>
    <property type="match status" value="1"/>
</dbReference>
<gene>
    <name type="primary">bcp</name>
    <name type="ordered locus">SF2523</name>
    <name type="ordered locus">S2673</name>
</gene>
<evidence type="ECO:0000250" key="1">
    <source>
        <dbReference type="UniProtKB" id="P0AE52"/>
    </source>
</evidence>
<evidence type="ECO:0000255" key="2">
    <source>
        <dbReference type="PROSITE-ProRule" id="PRU00691"/>
    </source>
</evidence>
<evidence type="ECO:0000305" key="3"/>
<reference key="1">
    <citation type="journal article" date="2002" name="Nucleic Acids Res.">
        <title>Genome sequence of Shigella flexneri 2a: insights into pathogenicity through comparison with genomes of Escherichia coli K12 and O157.</title>
        <authorList>
            <person name="Jin Q."/>
            <person name="Yuan Z."/>
            <person name="Xu J."/>
            <person name="Wang Y."/>
            <person name="Shen Y."/>
            <person name="Lu W."/>
            <person name="Wang J."/>
            <person name="Liu H."/>
            <person name="Yang J."/>
            <person name="Yang F."/>
            <person name="Zhang X."/>
            <person name="Zhang J."/>
            <person name="Yang G."/>
            <person name="Wu H."/>
            <person name="Qu D."/>
            <person name="Dong J."/>
            <person name="Sun L."/>
            <person name="Xue Y."/>
            <person name="Zhao A."/>
            <person name="Gao Y."/>
            <person name="Zhu J."/>
            <person name="Kan B."/>
            <person name="Ding K."/>
            <person name="Chen S."/>
            <person name="Cheng H."/>
            <person name="Yao Z."/>
            <person name="He B."/>
            <person name="Chen R."/>
            <person name="Ma D."/>
            <person name="Qiang B."/>
            <person name="Wen Y."/>
            <person name="Hou Y."/>
            <person name="Yu J."/>
        </authorList>
    </citation>
    <scope>NUCLEOTIDE SEQUENCE [LARGE SCALE GENOMIC DNA]</scope>
    <source>
        <strain>301 / Serotype 2a</strain>
    </source>
</reference>
<reference key="2">
    <citation type="journal article" date="2003" name="Infect. Immun.">
        <title>Complete genome sequence and comparative genomics of Shigella flexneri serotype 2a strain 2457T.</title>
        <authorList>
            <person name="Wei J."/>
            <person name="Goldberg M.B."/>
            <person name="Burland V."/>
            <person name="Venkatesan M.M."/>
            <person name="Deng W."/>
            <person name="Fournier G."/>
            <person name="Mayhew G.F."/>
            <person name="Plunkett G. III"/>
            <person name="Rose D.J."/>
            <person name="Darling A."/>
            <person name="Mau B."/>
            <person name="Perna N.T."/>
            <person name="Payne S.M."/>
            <person name="Runyen-Janecky L.J."/>
            <person name="Zhou S."/>
            <person name="Schwartz D.C."/>
            <person name="Blattner F.R."/>
        </authorList>
    </citation>
    <scope>NUCLEOTIDE SEQUENCE [LARGE SCALE GENOMIC DNA]</scope>
    <source>
        <strain>ATCC 700930 / 2457T / Serotype 2a</strain>
    </source>
</reference>